<reference key="1">
    <citation type="journal article" date="2006" name="Proc. Natl. Acad. Sci. U.S.A.">
        <title>Burkholderia xenovorans LB400 harbors a multi-replicon, 9.73-Mbp genome shaped for versatility.</title>
        <authorList>
            <person name="Chain P.S.G."/>
            <person name="Denef V.J."/>
            <person name="Konstantinidis K.T."/>
            <person name="Vergez L.M."/>
            <person name="Agullo L."/>
            <person name="Reyes V.L."/>
            <person name="Hauser L."/>
            <person name="Cordova M."/>
            <person name="Gomez L."/>
            <person name="Gonzalez M."/>
            <person name="Land M."/>
            <person name="Lao V."/>
            <person name="Larimer F."/>
            <person name="LiPuma J.J."/>
            <person name="Mahenthiralingam E."/>
            <person name="Malfatti S.A."/>
            <person name="Marx C.J."/>
            <person name="Parnell J.J."/>
            <person name="Ramette A."/>
            <person name="Richardson P."/>
            <person name="Seeger M."/>
            <person name="Smith D."/>
            <person name="Spilker T."/>
            <person name="Sul W.J."/>
            <person name="Tsoi T.V."/>
            <person name="Ulrich L.E."/>
            <person name="Zhulin I.B."/>
            <person name="Tiedje J.M."/>
        </authorList>
    </citation>
    <scope>NUCLEOTIDE SEQUENCE [LARGE SCALE GENOMIC DNA]</scope>
    <source>
        <strain>LB400</strain>
    </source>
</reference>
<comment type="function">
    <text evidence="1">Removes the pyruvyl group from chorismate, with concomitant aromatization of the ring, to provide 4-hydroxybenzoate (4HB) for the ubiquinone pathway.</text>
</comment>
<comment type="catalytic activity">
    <reaction evidence="1">
        <text>chorismate = 4-hydroxybenzoate + pyruvate</text>
        <dbReference type="Rhea" id="RHEA:16505"/>
        <dbReference type="ChEBI" id="CHEBI:15361"/>
        <dbReference type="ChEBI" id="CHEBI:17879"/>
        <dbReference type="ChEBI" id="CHEBI:29748"/>
        <dbReference type="EC" id="4.1.3.40"/>
    </reaction>
</comment>
<comment type="pathway">
    <text evidence="1">Cofactor biosynthesis; ubiquinone biosynthesis.</text>
</comment>
<comment type="subcellular location">
    <subcellularLocation>
        <location evidence="1">Cytoplasm</location>
    </subcellularLocation>
</comment>
<comment type="similarity">
    <text evidence="1">Belongs to the UbiC family.</text>
</comment>
<name>UBIC_PARXL</name>
<keyword id="KW-0963">Cytoplasm</keyword>
<keyword id="KW-0456">Lyase</keyword>
<keyword id="KW-0670">Pyruvate</keyword>
<keyword id="KW-1185">Reference proteome</keyword>
<keyword id="KW-0831">Ubiquinone biosynthesis</keyword>
<organism>
    <name type="scientific">Paraburkholderia xenovorans (strain LB400)</name>
    <dbReference type="NCBI Taxonomy" id="266265"/>
    <lineage>
        <taxon>Bacteria</taxon>
        <taxon>Pseudomonadati</taxon>
        <taxon>Pseudomonadota</taxon>
        <taxon>Betaproteobacteria</taxon>
        <taxon>Burkholderiales</taxon>
        <taxon>Burkholderiaceae</taxon>
        <taxon>Paraburkholderia</taxon>
    </lineage>
</organism>
<proteinExistence type="inferred from homology"/>
<sequence length="227" mass="24497">MSIRFVAADAHWRVAPLPGLSAAQKDWLTRGGSLTAHLRALGAVAVRVTREGVALPWPDEHAALGLAPRAPVWVREVVLAVEGVPFVAAHSVAPLAASAGVWQAMRRLRTRPLAELLYSDSSVARSSLVSRRLTARHPLYRLAACAIESLPPHALVARRSVFERHGAPLMVTECMLPALWAHLATVSGAGGSGDWSAHPRVREHGRPLEHTASRAHPATRASDEQRR</sequence>
<dbReference type="EC" id="4.1.3.40" evidence="1"/>
<dbReference type="EMBL" id="CP000270">
    <property type="protein sequence ID" value="ABE29658.1"/>
    <property type="molecule type" value="Genomic_DNA"/>
</dbReference>
<dbReference type="RefSeq" id="WP_011487393.1">
    <property type="nucleotide sequence ID" value="NC_007951.1"/>
</dbReference>
<dbReference type="SMR" id="Q142T1"/>
<dbReference type="STRING" id="266265.Bxe_A3325"/>
<dbReference type="KEGG" id="bxb:DR64_1025"/>
<dbReference type="KEGG" id="bxe:Bxe_A3325"/>
<dbReference type="PATRIC" id="fig|266265.5.peg.1152"/>
<dbReference type="eggNOG" id="COG3161">
    <property type="taxonomic scope" value="Bacteria"/>
</dbReference>
<dbReference type="OrthoDB" id="8606430at2"/>
<dbReference type="UniPathway" id="UPA00232"/>
<dbReference type="Proteomes" id="UP000001817">
    <property type="component" value="Chromosome 1"/>
</dbReference>
<dbReference type="GO" id="GO:0005829">
    <property type="term" value="C:cytosol"/>
    <property type="evidence" value="ECO:0007669"/>
    <property type="project" value="TreeGrafter"/>
</dbReference>
<dbReference type="GO" id="GO:0008813">
    <property type="term" value="F:chorismate lyase activity"/>
    <property type="evidence" value="ECO:0007669"/>
    <property type="project" value="UniProtKB-UniRule"/>
</dbReference>
<dbReference type="GO" id="GO:0042866">
    <property type="term" value="P:pyruvate biosynthetic process"/>
    <property type="evidence" value="ECO:0007669"/>
    <property type="project" value="UniProtKB-UniRule"/>
</dbReference>
<dbReference type="GO" id="GO:0006744">
    <property type="term" value="P:ubiquinone biosynthetic process"/>
    <property type="evidence" value="ECO:0007669"/>
    <property type="project" value="UniProtKB-UniRule"/>
</dbReference>
<dbReference type="Gene3D" id="3.40.1410.10">
    <property type="entry name" value="Chorismate lyase-like"/>
    <property type="match status" value="1"/>
</dbReference>
<dbReference type="HAMAP" id="MF_01632">
    <property type="entry name" value="UbiC"/>
    <property type="match status" value="1"/>
</dbReference>
<dbReference type="InterPro" id="IPR007440">
    <property type="entry name" value="Chorismate--pyruvate_lyase"/>
</dbReference>
<dbReference type="InterPro" id="IPR028978">
    <property type="entry name" value="Chorismate_lyase_/UTRA_dom_sf"/>
</dbReference>
<dbReference type="PANTHER" id="PTHR38683">
    <property type="entry name" value="CHORISMATE PYRUVATE-LYASE"/>
    <property type="match status" value="1"/>
</dbReference>
<dbReference type="PANTHER" id="PTHR38683:SF1">
    <property type="entry name" value="CHORISMATE PYRUVATE-LYASE"/>
    <property type="match status" value="1"/>
</dbReference>
<dbReference type="Pfam" id="PF04345">
    <property type="entry name" value="Chor_lyase"/>
    <property type="match status" value="1"/>
</dbReference>
<dbReference type="SUPFAM" id="SSF64288">
    <property type="entry name" value="Chorismate lyase-like"/>
    <property type="match status" value="1"/>
</dbReference>
<evidence type="ECO:0000255" key="1">
    <source>
        <dbReference type="HAMAP-Rule" id="MF_01632"/>
    </source>
</evidence>
<evidence type="ECO:0000256" key="2">
    <source>
        <dbReference type="SAM" id="MobiDB-lite"/>
    </source>
</evidence>
<gene>
    <name evidence="1" type="primary">ubiC</name>
    <name type="ordered locus">Bxeno_A1120</name>
    <name type="ORF">Bxe_A3325</name>
</gene>
<feature type="chain" id="PRO_0000255904" description="Probable chorismate pyruvate-lyase">
    <location>
        <begin position="1"/>
        <end position="227"/>
    </location>
</feature>
<feature type="region of interest" description="Disordered" evidence="2">
    <location>
        <begin position="192"/>
        <end position="227"/>
    </location>
</feature>
<feature type="compositionally biased region" description="Basic and acidic residues" evidence="2">
    <location>
        <begin position="200"/>
        <end position="212"/>
    </location>
</feature>
<feature type="binding site" evidence="1">
    <location>
        <position position="75"/>
    </location>
    <ligand>
        <name>substrate</name>
    </ligand>
</feature>
<feature type="binding site" evidence="1">
    <location>
        <position position="113"/>
    </location>
    <ligand>
        <name>substrate</name>
    </ligand>
</feature>
<feature type="binding site" evidence="1">
    <location>
        <position position="173"/>
    </location>
    <ligand>
        <name>substrate</name>
    </ligand>
</feature>
<accession>Q142T1</accession>
<protein>
    <recommendedName>
        <fullName evidence="1">Probable chorismate pyruvate-lyase</fullName>
        <shortName evidence="1">CL</shortName>
        <shortName evidence="1">CPL</shortName>
        <ecNumber evidence="1">4.1.3.40</ecNumber>
    </recommendedName>
</protein>